<evidence type="ECO:0000305" key="1"/>
<comment type="function">
    <text>Involved in bacteriochlorophyll pigment biosynthesis; introduces a magnesium ion into protoporphyrin IX to yield Mg-protoroporphyrin IX.</text>
</comment>
<comment type="catalytic activity">
    <reaction>
        <text>protoporphyrin IX + Mg(2+) + ATP + H2O = Mg-protoporphyrin IX + ADP + phosphate + 3 H(+)</text>
        <dbReference type="Rhea" id="RHEA:13961"/>
        <dbReference type="ChEBI" id="CHEBI:15377"/>
        <dbReference type="ChEBI" id="CHEBI:15378"/>
        <dbReference type="ChEBI" id="CHEBI:18420"/>
        <dbReference type="ChEBI" id="CHEBI:30616"/>
        <dbReference type="ChEBI" id="CHEBI:43474"/>
        <dbReference type="ChEBI" id="CHEBI:57306"/>
        <dbReference type="ChEBI" id="CHEBI:60492"/>
        <dbReference type="ChEBI" id="CHEBI:456216"/>
        <dbReference type="EC" id="6.6.1.1"/>
    </reaction>
</comment>
<comment type="pathway">
    <text>Porphyrin-containing compound metabolism; bacteriochlorophyll biosynthesis (light-independent).</text>
</comment>
<comment type="similarity">
    <text evidence="1">Belongs to the Mg-chelatase subunit H family.</text>
</comment>
<comment type="sequence caution" evidence="1">
    <conflict type="erroneous initiation">
        <sequence resource="EMBL-CDS" id="CAB06301"/>
    </conflict>
</comment>
<organism>
    <name type="scientific">Chlorobaculum parvum (strain DSM 263 / NCIMB 8327)</name>
    <name type="common">Chlorobium vibrioforme subsp. thiosulfatophilum</name>
    <dbReference type="NCBI Taxonomy" id="517417"/>
    <lineage>
        <taxon>Bacteria</taxon>
        <taxon>Pseudomonadati</taxon>
        <taxon>Chlorobiota</taxon>
        <taxon>Chlorobiia</taxon>
        <taxon>Chlorobiales</taxon>
        <taxon>Chlorobiaceae</taxon>
        <taxon>Chlorobaculum</taxon>
    </lineage>
</organism>
<sequence>MAQRRKITAIVGLEQYNAGLWRKIKSMLDKDAELVQLSDVDLEKQNPEAATAIREADCVFMSMINFKEQIDWFKEQLDQAINEKTIFIFESMPEAMALTKVGSYQVTEGKSGMPDMVKKIAKMLVKGRDEDALYGYMKLMKIMRTILPLVPNKAKDFKNWLMVYSYWLQPTPENIVNMFRLILREYFDSNVKVEPIVDVPNMGLYHPDAKEYFKDVKSFKSWSKKRGVNFDKSQKMALLFFRKHLLQEKTYIDNTIRTLEKHGVNVFPAFVMGVEGHVLVRDWLMKEKIDLLVNMMGFGLVGGPAGSTKPGTAADARHEILTGLDVPYMVAQPLLVQDFESWHELGVSPMQVTFTYSIPEMDGATAPVILGALQDGKVETVQERLDRLAILSKKWMRLRATSNRDKRVALVVYDYPPGLGKKATAALLDVPTTLLRILERLKKEGYNVGTLPESPTKLFEMLDRATDYQIMQNKPEAIKVSREKYNELATYHERERIEERWQAFPGEIAPVGSEEVFLGGLRLGNIYIGVQPRLGVQGDPMRLIFDKANTPHHQYISFYRWISREFDAHALVHVGMHGSVEWMPGLQTGLTGECWPDALLGEVPHFYIYPVNNPSESTIAKRRGLATMVSHVVPPLARAGLYKELPALKDLLADYRERNQAQGEDVEQVQEAIMTKAELLNLTDDCPRRPDEPFSDFVSRLYIYIVELENRLISNSLHVFGEAGPLESQIITITETIKNRGENGRSLPYIFIDTSGRNGHYGSYEEISSLSRKGDEAAIQLREWAENACREFVKQTMFDRKNPMQVFESVTGGGRMPEEDKPFIQRIIQEGAMMIQALSDNSSEMNSLVKVLDGGYIPSGPGGDLVRDGMNVLPSGRNIHSIDPWRIPSETAFKRGTLIADGLISKHVAENDGQYPETIAEVIWGLDTIKTKGEAVAVVIRLMGAEPAYDAFGKISHYNLTPLDKLGRPRVDVLMQLSPIFRDAFGILMDQLDRLVKDAAKADEPHEMNFIKKHVDEALAEGMDFEAATSRQFTQAPGAYGTYVDDMIEDSAWENEGDLDDLFIRRNSSAYGGGRKGEKQSEILQKLLGSVDRVVHQVDSTEFGISDIDHYFSSSGSLQLAARRRNTKTSDIKLNYVESFTSDIKLDEADKSLRVEYRSKLLNPKWFEGMLKHGHSGAGEISNRVTYMLGWDAVTKSVDDWVYKKTAETYALDPEMRERLATLNPQAIKNIVGRMLEAHGRGMWKADQSMIEELQEIYADLEDRLEGMADDD</sequence>
<reference key="1">
    <citation type="journal article" date="1996" name="Hereditas">
        <title>Clustering of genes with function in the biosynthesis of bacteriochlorophyll and heme in the green sulfur bacterium Chlorobium vibrioforme.</title>
        <authorList>
            <person name="Petersen B.L."/>
            <person name="Moeller M.G."/>
            <person name="Stummann B.M."/>
            <person name="Henningsen K.W."/>
        </authorList>
    </citation>
    <scope>NUCLEOTIDE SEQUENCE [GENOMIC DNA]</scope>
</reference>
<reference key="2">
    <citation type="submission" date="2008-06" db="EMBL/GenBank/DDBJ databases">
        <title>Complete sequence of Chlorobaculum parvum NCIB 8327.</title>
        <authorList>
            <consortium name="US DOE Joint Genome Institute"/>
            <person name="Lucas S."/>
            <person name="Copeland A."/>
            <person name="Lapidus A."/>
            <person name="Glavina del Rio T."/>
            <person name="Dalin E."/>
            <person name="Tice H."/>
            <person name="Bruce D."/>
            <person name="Goodwin L."/>
            <person name="Pitluck S."/>
            <person name="Schmutz J."/>
            <person name="Larimer F."/>
            <person name="Land M."/>
            <person name="Hauser L."/>
            <person name="Kyrpides N."/>
            <person name="Mikhailova N."/>
            <person name="Zhao F."/>
            <person name="Li T."/>
            <person name="Liu Z."/>
            <person name="Overmann J."/>
            <person name="Bryant D.A."/>
            <person name="Richardson P."/>
        </authorList>
    </citation>
    <scope>NUCLEOTIDE SEQUENCE [LARGE SCALE GENOMIC DNA]</scope>
    <source>
        <strain>DSM 263 / NCIMB 8327</strain>
    </source>
</reference>
<accession>O50314</accession>
<accession>B3QMJ4</accession>
<feature type="chain" id="PRO_0000219884" description="Magnesium-chelatase subunit H">
    <location>
        <begin position="1"/>
        <end position="1272"/>
    </location>
</feature>
<feature type="sequence conflict" description="In Ref. 1; CAB06301." evidence="1" ref="1">
    <original>L</original>
    <variation>W</variation>
    <location>
        <position position="183"/>
    </location>
</feature>
<proteinExistence type="inferred from homology"/>
<gene>
    <name type="primary">bchH</name>
    <name type="ordered locus">Cpar_0728</name>
</gene>
<dbReference type="EC" id="6.6.1.1"/>
<dbReference type="EMBL" id="Z83933">
    <property type="protein sequence ID" value="CAB06301.1"/>
    <property type="status" value="ALT_INIT"/>
    <property type="molecule type" value="Genomic_DNA"/>
</dbReference>
<dbReference type="EMBL" id="CP001099">
    <property type="protein sequence ID" value="ACF11147.1"/>
    <property type="molecule type" value="Genomic_DNA"/>
</dbReference>
<dbReference type="PIR" id="T17194">
    <property type="entry name" value="T17194"/>
</dbReference>
<dbReference type="RefSeq" id="WP_012501980.1">
    <property type="nucleotide sequence ID" value="NC_011027.1"/>
</dbReference>
<dbReference type="SMR" id="O50314"/>
<dbReference type="STRING" id="517417.Cpar_0728"/>
<dbReference type="KEGG" id="cpc:Cpar_0728"/>
<dbReference type="eggNOG" id="COG1429">
    <property type="taxonomic scope" value="Bacteria"/>
</dbReference>
<dbReference type="HOGENOM" id="CLU_002017_1_2_10"/>
<dbReference type="OrthoDB" id="9757976at2"/>
<dbReference type="UniPathway" id="UPA00671"/>
<dbReference type="Proteomes" id="UP000008811">
    <property type="component" value="Chromosome"/>
</dbReference>
<dbReference type="GO" id="GO:0005524">
    <property type="term" value="F:ATP binding"/>
    <property type="evidence" value="ECO:0007669"/>
    <property type="project" value="UniProtKB-KW"/>
</dbReference>
<dbReference type="GO" id="GO:0016851">
    <property type="term" value="F:magnesium chelatase activity"/>
    <property type="evidence" value="ECO:0007669"/>
    <property type="project" value="UniProtKB-EC"/>
</dbReference>
<dbReference type="GO" id="GO:0036070">
    <property type="term" value="P:light-independent bacteriochlorophyll biosynthetic process"/>
    <property type="evidence" value="ECO:0007669"/>
    <property type="project" value="UniProtKB-UniPathway"/>
</dbReference>
<dbReference type="GO" id="GO:0015979">
    <property type="term" value="P:photosynthesis"/>
    <property type="evidence" value="ECO:0007669"/>
    <property type="project" value="UniProtKB-KW"/>
</dbReference>
<dbReference type="CDD" id="cd10150">
    <property type="entry name" value="CobN_like"/>
    <property type="match status" value="1"/>
</dbReference>
<dbReference type="InterPro" id="IPR011771">
    <property type="entry name" value="BchH"/>
</dbReference>
<dbReference type="InterPro" id="IPR003672">
    <property type="entry name" value="CobN/Mg_chltase"/>
</dbReference>
<dbReference type="InterPro" id="IPR022571">
    <property type="entry name" value="Mg_chelatase_H_N"/>
</dbReference>
<dbReference type="NCBIfam" id="TIGR02025">
    <property type="entry name" value="BchH"/>
    <property type="match status" value="1"/>
</dbReference>
<dbReference type="PANTHER" id="PTHR44119">
    <property type="entry name" value="MAGNESIUM-CHELATASE SUBUNIT CHLH, CHLOROPLASTIC"/>
    <property type="match status" value="1"/>
</dbReference>
<dbReference type="PANTHER" id="PTHR44119:SF1">
    <property type="entry name" value="MAGNESIUM-CHELATASE SUBUNIT CHLH, CHLOROPLASTIC"/>
    <property type="match status" value="1"/>
</dbReference>
<dbReference type="Pfam" id="PF02514">
    <property type="entry name" value="CobN-Mg_chel"/>
    <property type="match status" value="1"/>
</dbReference>
<dbReference type="Pfam" id="PF11965">
    <property type="entry name" value="DUF3479"/>
    <property type="match status" value="1"/>
</dbReference>
<keyword id="KW-0067">ATP-binding</keyword>
<keyword id="KW-0077">Bacteriochlorophyll biosynthesis</keyword>
<keyword id="KW-0149">Chlorophyll biosynthesis</keyword>
<keyword id="KW-0436">Ligase</keyword>
<keyword id="KW-0547">Nucleotide-binding</keyword>
<keyword id="KW-0602">Photosynthesis</keyword>
<protein>
    <recommendedName>
        <fullName>Magnesium-chelatase subunit H</fullName>
        <ecNumber>6.6.1.1</ecNumber>
    </recommendedName>
    <alternativeName>
        <fullName>Mg-protoporphyrin IX chelatase subunit H</fullName>
    </alternativeName>
</protein>
<name>BCHH_CHLP8</name>